<keyword id="KW-0150">Chloroplast</keyword>
<keyword id="KW-0378">Hydrolase</keyword>
<keyword id="KW-0934">Plastid</keyword>
<keyword id="KW-0645">Protease</keyword>
<keyword id="KW-0720">Serine protease</keyword>
<gene>
    <name evidence="1" type="primary">clpP</name>
</gene>
<dbReference type="EC" id="3.4.21.92" evidence="1"/>
<dbReference type="EMBL" id="EF380352">
    <property type="protein sequence ID" value="ABQ43284.1"/>
    <property type="molecule type" value="Genomic_DNA"/>
</dbReference>
<dbReference type="RefSeq" id="YP_001294123.1">
    <property type="nucleotide sequence ID" value="NC_009598.1"/>
</dbReference>
<dbReference type="SMR" id="A6MME7"/>
<dbReference type="MEROPS" id="S14.002"/>
<dbReference type="GeneID" id="5236546"/>
<dbReference type="GO" id="GO:0009570">
    <property type="term" value="C:chloroplast stroma"/>
    <property type="evidence" value="ECO:0007669"/>
    <property type="project" value="UniProtKB-SubCell"/>
</dbReference>
<dbReference type="GO" id="GO:0009368">
    <property type="term" value="C:endopeptidase Clp complex"/>
    <property type="evidence" value="ECO:0007669"/>
    <property type="project" value="TreeGrafter"/>
</dbReference>
<dbReference type="GO" id="GO:0004176">
    <property type="term" value="F:ATP-dependent peptidase activity"/>
    <property type="evidence" value="ECO:0007669"/>
    <property type="project" value="InterPro"/>
</dbReference>
<dbReference type="GO" id="GO:0051117">
    <property type="term" value="F:ATPase binding"/>
    <property type="evidence" value="ECO:0007669"/>
    <property type="project" value="TreeGrafter"/>
</dbReference>
<dbReference type="GO" id="GO:0004252">
    <property type="term" value="F:serine-type endopeptidase activity"/>
    <property type="evidence" value="ECO:0007669"/>
    <property type="project" value="UniProtKB-UniRule"/>
</dbReference>
<dbReference type="GO" id="GO:0006515">
    <property type="term" value="P:protein quality control for misfolded or incompletely synthesized proteins"/>
    <property type="evidence" value="ECO:0007669"/>
    <property type="project" value="TreeGrafter"/>
</dbReference>
<dbReference type="CDD" id="cd07017">
    <property type="entry name" value="S14_ClpP_2"/>
    <property type="match status" value="1"/>
</dbReference>
<dbReference type="FunFam" id="3.90.226.10:FF:000006">
    <property type="entry name" value="ATP-dependent Clp protease proteolytic subunit"/>
    <property type="match status" value="1"/>
</dbReference>
<dbReference type="Gene3D" id="3.90.226.10">
    <property type="entry name" value="2-enoyl-CoA Hydratase, Chain A, domain 1"/>
    <property type="match status" value="1"/>
</dbReference>
<dbReference type="HAMAP" id="MF_00444">
    <property type="entry name" value="ClpP"/>
    <property type="match status" value="1"/>
</dbReference>
<dbReference type="InterPro" id="IPR001907">
    <property type="entry name" value="ClpP"/>
</dbReference>
<dbReference type="InterPro" id="IPR029045">
    <property type="entry name" value="ClpP/crotonase-like_dom_sf"/>
</dbReference>
<dbReference type="InterPro" id="IPR023562">
    <property type="entry name" value="ClpP/TepA"/>
</dbReference>
<dbReference type="InterPro" id="IPR033135">
    <property type="entry name" value="ClpP_His_AS"/>
</dbReference>
<dbReference type="InterPro" id="IPR018215">
    <property type="entry name" value="ClpP_Ser_AS"/>
</dbReference>
<dbReference type="PANTHER" id="PTHR10381">
    <property type="entry name" value="ATP-DEPENDENT CLP PROTEASE PROTEOLYTIC SUBUNIT"/>
    <property type="match status" value="1"/>
</dbReference>
<dbReference type="PANTHER" id="PTHR10381:SF15">
    <property type="entry name" value="CHLOROPLASTIC ATP-DEPENDENT CLP PROTEASE PROTEOLYTIC SUBUNIT 1"/>
    <property type="match status" value="1"/>
</dbReference>
<dbReference type="Pfam" id="PF00574">
    <property type="entry name" value="CLP_protease"/>
    <property type="match status" value="1"/>
</dbReference>
<dbReference type="PRINTS" id="PR00127">
    <property type="entry name" value="CLPPROTEASEP"/>
</dbReference>
<dbReference type="SUPFAM" id="SSF52096">
    <property type="entry name" value="ClpP/crotonase"/>
    <property type="match status" value="1"/>
</dbReference>
<dbReference type="PROSITE" id="PS00382">
    <property type="entry name" value="CLP_PROTEASE_HIS"/>
    <property type="match status" value="1"/>
</dbReference>
<dbReference type="PROSITE" id="PS00381">
    <property type="entry name" value="CLP_PROTEASE_SER"/>
    <property type="match status" value="1"/>
</dbReference>
<evidence type="ECO:0000255" key="1">
    <source>
        <dbReference type="HAMAP-Rule" id="MF_00444"/>
    </source>
</evidence>
<name>CLPP_CHLSC</name>
<accession>A6MME7</accession>
<comment type="function">
    <text evidence="1">Cleaves peptides in various proteins in a process that requires ATP hydrolysis. Has a chymotrypsin-like activity. Plays a major role in the degradation of misfolded proteins.</text>
</comment>
<comment type="catalytic activity">
    <reaction evidence="1">
        <text>Hydrolysis of proteins to small peptides in the presence of ATP and magnesium. alpha-casein is the usual test substrate. In the absence of ATP, only oligopeptides shorter than five residues are hydrolyzed (such as succinyl-Leu-Tyr-|-NHMec, and Leu-Tyr-Leu-|-Tyr-Trp, in which cleavage of the -Tyr-|-Leu- and -Tyr-|-Trp bonds also occurs).</text>
        <dbReference type="EC" id="3.4.21.92"/>
    </reaction>
</comment>
<comment type="subunit">
    <text>Component of the chloroplastic Clp protease core complex.</text>
</comment>
<comment type="subcellular location">
    <subcellularLocation>
        <location evidence="1">Plastid</location>
        <location evidence="1">Chloroplast stroma</location>
    </subcellularLocation>
</comment>
<comment type="similarity">
    <text evidence="1">Belongs to the peptidase S14 family.</text>
</comment>
<reference key="1">
    <citation type="journal article" date="2007" name="Mol. Phylogenet. Evol.">
        <title>Phylogenetic and evolutionary implications of complete chloroplast genome sequences of four early-diverging angiosperms: Buxus (Buxaceae), Chloranthus (Chloranthaceae), Dioscorea (Dioscoreaceae), and Illicium (Schisandraceae).</title>
        <authorList>
            <person name="Hansen D.R."/>
            <person name="Dastidar S.G."/>
            <person name="Cai Z."/>
            <person name="Penaflor C."/>
            <person name="Kuehl J.V."/>
            <person name="Boore J.L."/>
            <person name="Jansen R.K."/>
        </authorList>
    </citation>
    <scope>NUCLEOTIDE SEQUENCE [LARGE SCALE GENOMIC DNA]</scope>
</reference>
<organism>
    <name type="scientific">Chloranthus spicatus</name>
    <name type="common">Chulantree</name>
    <name type="synonym">Nigrina spicata</name>
    <dbReference type="NCBI Taxonomy" id="13006"/>
    <lineage>
        <taxon>Eukaryota</taxon>
        <taxon>Viridiplantae</taxon>
        <taxon>Streptophyta</taxon>
        <taxon>Embryophyta</taxon>
        <taxon>Tracheophyta</taxon>
        <taxon>Spermatophyta</taxon>
        <taxon>Magnoliopsida</taxon>
        <taxon>Chloranthales</taxon>
        <taxon>Chloranthaceae</taxon>
        <taxon>Chloranthus</taxon>
    </lineage>
</organism>
<sequence>MPIGVPKVPFRSPGEEDAVWVDVNRLHRERLLFLGQEVDSEISNQLVGLMVYLSIEDDTRDLYLFINSPGGWVIPGLTIYDTMQFVPPDVHTICMGLAASMGSFILVGGEITKRLAFPHARIMIHQPASSFYEAQAGEFILEAEELLKLRETLTRVYVQRTGNPLWIVSEDMERDVFMSATEAQAHGIVDLVAVENTGDFA</sequence>
<feature type="chain" id="PRO_0000309293" description="ATP-dependent Clp protease proteolytic subunit">
    <location>
        <begin position="1"/>
        <end position="201"/>
    </location>
</feature>
<feature type="active site" description="Nucleophile" evidence="1">
    <location>
        <position position="100"/>
    </location>
</feature>
<feature type="active site" evidence="1">
    <location>
        <position position="125"/>
    </location>
</feature>
<protein>
    <recommendedName>
        <fullName evidence="1">ATP-dependent Clp protease proteolytic subunit</fullName>
        <ecNumber evidence="1">3.4.21.92</ecNumber>
    </recommendedName>
    <alternativeName>
        <fullName evidence="1">Endopeptidase Clp</fullName>
    </alternativeName>
</protein>
<geneLocation type="chloroplast"/>
<proteinExistence type="inferred from homology"/>